<keyword id="KW-0002">3D-structure</keyword>
<keyword id="KW-0044">Antibiotic</keyword>
<keyword id="KW-0929">Antimicrobial</keyword>
<keyword id="KW-0081">Bacteriolytic enzyme</keyword>
<keyword id="KW-0903">Direct protein sequencing</keyword>
<keyword id="KW-1015">Disulfide bond</keyword>
<keyword id="KW-0326">Glycosidase</keyword>
<keyword id="KW-0378">Hydrolase</keyword>
<keyword id="KW-1185">Reference proteome</keyword>
<keyword id="KW-0732">Signal</keyword>
<dbReference type="EC" id="3.2.1.17"/>
<dbReference type="EMBL" id="L37416">
    <property type="protein sequence ID" value="AAB40947.1"/>
    <property type="molecule type" value="mRNA"/>
</dbReference>
<dbReference type="PIR" id="JC4233">
    <property type="entry name" value="JC4233"/>
</dbReference>
<dbReference type="RefSeq" id="NP_001037448.1">
    <property type="nucleotide sequence ID" value="NM_001043983.1"/>
</dbReference>
<dbReference type="PDB" id="1GD6">
    <property type="method" value="X-ray"/>
    <property type="resolution" value="2.50 A"/>
    <property type="chains" value="A=19-137"/>
</dbReference>
<dbReference type="PDB" id="2RSC">
    <property type="method" value="NMR"/>
    <property type="chains" value="A=19-137"/>
</dbReference>
<dbReference type="PDBsum" id="1GD6"/>
<dbReference type="PDBsum" id="2RSC"/>
<dbReference type="BMRB" id="P48816"/>
<dbReference type="SMR" id="P48816"/>
<dbReference type="FunCoup" id="P48816">
    <property type="interactions" value="16"/>
</dbReference>
<dbReference type="STRING" id="7091.P48816"/>
<dbReference type="CAZy" id="GH22">
    <property type="family name" value="Glycoside Hydrolase Family 22"/>
</dbReference>
<dbReference type="PaxDb" id="7091-BGIBMGA010439-TA"/>
<dbReference type="EnsemblMetazoa" id="NM_001043983.1">
    <property type="protein sequence ID" value="NP_001037448.1"/>
    <property type="gene ID" value="GeneID_693015"/>
</dbReference>
<dbReference type="GeneID" id="693015"/>
<dbReference type="KEGG" id="bmor:693015"/>
<dbReference type="CTD" id="693015"/>
<dbReference type="eggNOG" id="ENOG502S4CB">
    <property type="taxonomic scope" value="Eukaryota"/>
</dbReference>
<dbReference type="HOGENOM" id="CLU_111620_2_0_1"/>
<dbReference type="InParanoid" id="P48816"/>
<dbReference type="OMA" id="YWCSNTS"/>
<dbReference type="OrthoDB" id="144219at7088"/>
<dbReference type="EvolutionaryTrace" id="P48816"/>
<dbReference type="Proteomes" id="UP000005204">
    <property type="component" value="Unassembled WGS sequence"/>
</dbReference>
<dbReference type="GO" id="GO:0003796">
    <property type="term" value="F:lysozyme activity"/>
    <property type="evidence" value="ECO:0007669"/>
    <property type="project" value="UniProtKB-EC"/>
</dbReference>
<dbReference type="GO" id="GO:0042742">
    <property type="term" value="P:defense response to bacterium"/>
    <property type="evidence" value="ECO:0007669"/>
    <property type="project" value="UniProtKB-KW"/>
</dbReference>
<dbReference type="GO" id="GO:0031640">
    <property type="term" value="P:killing of cells of another organism"/>
    <property type="evidence" value="ECO:0007669"/>
    <property type="project" value="UniProtKB-KW"/>
</dbReference>
<dbReference type="CDD" id="cd00119">
    <property type="entry name" value="LYZ"/>
    <property type="match status" value="1"/>
</dbReference>
<dbReference type="FunFam" id="1.10.530.10:FF:000001">
    <property type="entry name" value="Lysozyme C"/>
    <property type="match status" value="1"/>
</dbReference>
<dbReference type="Gene3D" id="1.10.530.10">
    <property type="match status" value="1"/>
</dbReference>
<dbReference type="InterPro" id="IPR001916">
    <property type="entry name" value="Glyco_hydro_22"/>
</dbReference>
<dbReference type="InterPro" id="IPR019799">
    <property type="entry name" value="Glyco_hydro_22_CS"/>
</dbReference>
<dbReference type="InterPro" id="IPR000974">
    <property type="entry name" value="Glyco_hydro_22_lys"/>
</dbReference>
<dbReference type="InterPro" id="IPR023346">
    <property type="entry name" value="Lysozyme-like_dom_sf"/>
</dbReference>
<dbReference type="PANTHER" id="PTHR11407">
    <property type="entry name" value="LYSOZYME C"/>
    <property type="match status" value="1"/>
</dbReference>
<dbReference type="PANTHER" id="PTHR11407:SF63">
    <property type="entry name" value="LYSOZYME C"/>
    <property type="match status" value="1"/>
</dbReference>
<dbReference type="Pfam" id="PF00062">
    <property type="entry name" value="Lys"/>
    <property type="match status" value="1"/>
</dbReference>
<dbReference type="PRINTS" id="PR00137">
    <property type="entry name" value="LYSOZYME"/>
</dbReference>
<dbReference type="PRINTS" id="PR00135">
    <property type="entry name" value="LYZLACT"/>
</dbReference>
<dbReference type="SMART" id="SM00263">
    <property type="entry name" value="LYZ1"/>
    <property type="match status" value="1"/>
</dbReference>
<dbReference type="SUPFAM" id="SSF53955">
    <property type="entry name" value="Lysozyme-like"/>
    <property type="match status" value="1"/>
</dbReference>
<dbReference type="PROSITE" id="PS00128">
    <property type="entry name" value="GLYCOSYL_HYDROL_F22_1"/>
    <property type="match status" value="1"/>
</dbReference>
<dbReference type="PROSITE" id="PS51348">
    <property type="entry name" value="GLYCOSYL_HYDROL_F22_2"/>
    <property type="match status" value="1"/>
</dbReference>
<protein>
    <recommendedName>
        <fullName>Lysozyme</fullName>
        <ecNumber>3.2.1.17</ecNumber>
    </recommendedName>
    <alternativeName>
        <fullName>1,4-beta-N-acetylmuramidase</fullName>
    </alternativeName>
</protein>
<reference key="1">
    <citation type="journal article" date="1995" name="Gene">
        <title>Isolation and characterization of the lysozyme-encoding gene from the silkworm Bombyx mori.</title>
        <authorList>
            <person name="Lee W.J."/>
            <person name="Brey P.T."/>
        </authorList>
    </citation>
    <scope>NUCLEOTIDE SEQUENCE [MRNA]</scope>
    <source>
        <tissue>Fat body</tissue>
    </source>
</reference>
<reference key="2">
    <citation type="journal article" date="1995" name="J. Invertebr. Pathol.">
        <title>Purification and partial characterization of an induced antibacterial protein in the silkworm, Bombyx mori.</title>
        <authorList>
            <person name="Abraham E.G."/>
            <person name="Nagaraju J."/>
            <person name="Salunke D."/>
            <person name="Gupta H.M."/>
            <person name="Datta R.K."/>
        </authorList>
    </citation>
    <scope>PROTEIN SEQUENCE OF 19-38</scope>
    <scope>FUNCTION</scope>
    <source>
        <strain>NB18</strain>
        <tissue>Larval hemolymph</tissue>
    </source>
</reference>
<evidence type="ECO:0000255" key="1">
    <source>
        <dbReference type="PROSITE-ProRule" id="PRU00680"/>
    </source>
</evidence>
<evidence type="ECO:0000269" key="2">
    <source>
    </source>
</evidence>
<evidence type="ECO:0007829" key="3">
    <source>
        <dbReference type="PDB" id="1GD6"/>
    </source>
</evidence>
<comment type="function">
    <text evidence="1 2">Lysozymes have primarily a bacteriolytic function; those in tissues and body fluids are associated with the monocyte-macrophage system and enhance the activity of immunoagents. Active against E.coli and M.luteus.</text>
</comment>
<comment type="catalytic activity">
    <reaction>
        <text>Hydrolysis of (1-&gt;4)-beta-linkages between N-acetylmuramic acid and N-acetyl-D-glucosamine residues in a peptidoglycan and between N-acetyl-D-glucosamine residues in chitodextrins.</text>
        <dbReference type="EC" id="3.2.1.17"/>
    </reaction>
</comment>
<comment type="developmental stage">
    <text>Expressed within 6 hours after induction, reaches maximum levels after 48 hours and declines after 72 hours after induction.</text>
</comment>
<comment type="induction">
    <text>By bacterial infection.</text>
</comment>
<comment type="similarity">
    <text evidence="1">Belongs to the glycosyl hydrolase 22 family.</text>
</comment>
<feature type="signal peptide" evidence="2">
    <location>
        <begin position="1"/>
        <end position="18"/>
    </location>
</feature>
<feature type="chain" id="PRO_0000018505" description="Lysozyme">
    <location>
        <begin position="19"/>
        <end position="137"/>
    </location>
</feature>
<feature type="domain" description="C-type lysozyme" evidence="1">
    <location>
        <begin position="19"/>
        <end position="137"/>
    </location>
</feature>
<feature type="active site" evidence="1">
    <location>
        <position position="50"/>
    </location>
</feature>
<feature type="active site" evidence="1">
    <location>
        <position position="67"/>
    </location>
</feature>
<feature type="disulfide bond" evidence="1">
    <location>
        <begin position="24"/>
        <end position="137"/>
    </location>
</feature>
<feature type="disulfide bond" evidence="1">
    <location>
        <begin position="45"/>
        <end position="127"/>
    </location>
</feature>
<feature type="disulfide bond" evidence="1">
    <location>
        <begin position="79"/>
        <end position="93"/>
    </location>
</feature>
<feature type="disulfide bond" evidence="1">
    <location>
        <begin position="89"/>
        <end position="107"/>
    </location>
</feature>
<feature type="helix" evidence="3">
    <location>
        <begin position="23"/>
        <end position="32"/>
    </location>
</feature>
<feature type="helix" evidence="3">
    <location>
        <begin position="37"/>
        <end position="39"/>
    </location>
</feature>
<feature type="helix" evidence="3">
    <location>
        <begin position="40"/>
        <end position="50"/>
    </location>
</feature>
<feature type="turn" evidence="3">
    <location>
        <begin position="51"/>
        <end position="53"/>
    </location>
</feature>
<feature type="strand" evidence="3">
    <location>
        <begin position="58"/>
        <end position="60"/>
    </location>
</feature>
<feature type="strand" evidence="3">
    <location>
        <begin position="66"/>
        <end position="68"/>
    </location>
</feature>
<feature type="turn" evidence="3">
    <location>
        <begin position="69"/>
        <end position="72"/>
    </location>
</feature>
<feature type="turn" evidence="3">
    <location>
        <begin position="75"/>
        <end position="78"/>
    </location>
</feature>
<feature type="strand" evidence="3">
    <location>
        <begin position="80"/>
        <end position="84"/>
    </location>
</feature>
<feature type="turn" evidence="3">
    <location>
        <begin position="87"/>
        <end position="90"/>
    </location>
</feature>
<feature type="helix" evidence="3">
    <location>
        <begin position="93"/>
        <end position="96"/>
    </location>
</feature>
<feature type="strand" evidence="3">
    <location>
        <begin position="97"/>
        <end position="99"/>
    </location>
</feature>
<feature type="helix" evidence="3">
    <location>
        <begin position="102"/>
        <end position="115"/>
    </location>
</feature>
<feature type="helix" evidence="3">
    <location>
        <begin position="116"/>
        <end position="119"/>
    </location>
</feature>
<feature type="helix" evidence="3">
    <location>
        <begin position="121"/>
        <end position="124"/>
    </location>
</feature>
<feature type="strand" evidence="3">
    <location>
        <begin position="127"/>
        <end position="129"/>
    </location>
</feature>
<proteinExistence type="evidence at protein level"/>
<organism>
    <name type="scientific">Bombyx mori</name>
    <name type="common">Silk moth</name>
    <dbReference type="NCBI Taxonomy" id="7091"/>
    <lineage>
        <taxon>Eukaryota</taxon>
        <taxon>Metazoa</taxon>
        <taxon>Ecdysozoa</taxon>
        <taxon>Arthropoda</taxon>
        <taxon>Hexapoda</taxon>
        <taxon>Insecta</taxon>
        <taxon>Pterygota</taxon>
        <taxon>Neoptera</taxon>
        <taxon>Endopterygota</taxon>
        <taxon>Lepidoptera</taxon>
        <taxon>Glossata</taxon>
        <taxon>Ditrysia</taxon>
        <taxon>Bombycoidea</taxon>
        <taxon>Bombycidae</taxon>
        <taxon>Bombycinae</taxon>
        <taxon>Bombyx</taxon>
    </lineage>
</organism>
<name>LYS_BOMMO</name>
<sequence length="137" mass="15668">MQKLIIFALVVLCVGSEAKTFTRCGLVHELRKHGFEENLMRNWVCLVEHESSRDTSKTNTNRNGSKDYGLFQINDRYWCSKGASPGKDCNVKCSDLLTDDITKAAKCAKKIYKRHRFDAWYGWKNHCQGSLPDISSC</sequence>
<accession>P48816</accession>
<accession>Q9TWL7</accession>